<name>Y027_SIFVH</name>
<sequence>MEEFIIKIAGTKGISNFKSYHFSIISNYENFFNFILPKDVKDVLVVLPFDEEKTKTIKHAITNARSNVSVTIMYSGKIRDEMIIGWRT</sequence>
<organism>
    <name type="scientific">Sulfolobus islandicus filamentous virus (isolate Iceland/Hveragerdi)</name>
    <name type="common">SIFV</name>
    <dbReference type="NCBI Taxonomy" id="654908"/>
    <lineage>
        <taxon>Viruses</taxon>
        <taxon>Adnaviria</taxon>
        <taxon>Zilligvirae</taxon>
        <taxon>Taleaviricota</taxon>
        <taxon>Tokiviricetes</taxon>
        <taxon>Ligamenvirales</taxon>
        <taxon>Lipothrixviridae</taxon>
        <taxon>Betalipothrixvirus</taxon>
        <taxon>Sulfolobus islandicus filamentous virus</taxon>
    </lineage>
</organism>
<gene>
    <name type="primary">SIFV0027</name>
</gene>
<proteinExistence type="predicted"/>
<feature type="chain" id="PRO_0000385430" description="Uncharacterized protein 27">
    <location>
        <begin position="1"/>
        <end position="88"/>
    </location>
</feature>
<protein>
    <recommendedName>
        <fullName>Uncharacterized protein 27</fullName>
    </recommendedName>
</protein>
<organismHost>
    <name type="scientific">Saccharolobus islandicus</name>
    <name type="common">Sulfolobus islandicus</name>
    <dbReference type="NCBI Taxonomy" id="43080"/>
</organismHost>
<keyword id="KW-1185">Reference proteome</keyword>
<reference key="1">
    <citation type="journal article" date="2000" name="Virology">
        <title>A novel lipothrixvirus, SIFV, of the extremely thermophilic crenarchaeon Sulfolobus.</title>
        <authorList>
            <person name="Arnold H.P."/>
            <person name="Zillig W."/>
            <person name="Ziese U."/>
            <person name="Holz I."/>
            <person name="Crosby M."/>
            <person name="Utterback T."/>
            <person name="Weidmann J.F."/>
            <person name="Umayam L.A."/>
            <person name="Teffera K."/>
            <person name="Kristjanson J.K."/>
            <person name="Klenk H.P."/>
            <person name="Nelson K.E."/>
            <person name="Fraser C.M."/>
        </authorList>
    </citation>
    <scope>NUCLEOTIDE SEQUENCE [GENOMIC DNA]</scope>
</reference>
<accession>Q914K3</accession>
<dbReference type="EMBL" id="AF440571">
    <property type="protein sequence ID" value="AAL27738.1"/>
    <property type="molecule type" value="Genomic_DNA"/>
</dbReference>
<dbReference type="RefSeq" id="NP_445692.1">
    <property type="nucleotide sequence ID" value="NC_003214.2"/>
</dbReference>
<dbReference type="SMR" id="Q914K3"/>
<dbReference type="GeneID" id="922302"/>
<dbReference type="KEGG" id="vg:922302"/>
<dbReference type="Proteomes" id="UP000007017">
    <property type="component" value="Segment"/>
</dbReference>
<dbReference type="InterPro" id="IPR032603">
    <property type="entry name" value="DUF4898"/>
</dbReference>
<dbReference type="Pfam" id="PF16239">
    <property type="entry name" value="DUF4898"/>
    <property type="match status" value="1"/>
</dbReference>